<proteinExistence type="inferred from homology"/>
<evidence type="ECO:0000255" key="1">
    <source>
        <dbReference type="HAMAP-Rule" id="MF_00629"/>
    </source>
</evidence>
<evidence type="ECO:0000305" key="2"/>
<reference key="1">
    <citation type="journal article" date="2009" name="BMC Genomics">
        <title>The complete genome sequence of Staphylothermus marinus reveals differences in sulfur metabolism among heterotrophic Crenarchaeota.</title>
        <authorList>
            <person name="Anderson I.J."/>
            <person name="Dharmarajan L."/>
            <person name="Rodriguez J."/>
            <person name="Hooper S."/>
            <person name="Porat I."/>
            <person name="Ulrich L.E."/>
            <person name="Elkins J.G."/>
            <person name="Mavromatis K."/>
            <person name="Sun H."/>
            <person name="Land M."/>
            <person name="Lapidus A."/>
            <person name="Lucas S."/>
            <person name="Barry K."/>
            <person name="Huber H."/>
            <person name="Zhulin I.B."/>
            <person name="Whitman W.B."/>
            <person name="Mukhopadhyay B."/>
            <person name="Woese C."/>
            <person name="Bristow J."/>
            <person name="Kyrpides N."/>
        </authorList>
    </citation>
    <scope>NUCLEOTIDE SEQUENCE [LARGE SCALE GENOMIC DNA]</scope>
    <source>
        <strain>ATCC 43588 / DSM 3639 / JCM 9404 / F1</strain>
    </source>
</reference>
<reference key="2">
    <citation type="journal article" date="2009" name="Stand. Genomic Sci.">
        <title>Complete genome sequence of Staphylothermus marinus Stetter and Fiala 1986 type strain F1.</title>
        <authorList>
            <person name="Anderson I.J."/>
            <person name="Sun H."/>
            <person name="Lapidus A."/>
            <person name="Copeland A."/>
            <person name="Glavina Del Rio T."/>
            <person name="Tice H."/>
            <person name="Dalin E."/>
            <person name="Lucas S."/>
            <person name="Barry K."/>
            <person name="Land M."/>
            <person name="Richardson P."/>
            <person name="Huber H."/>
            <person name="Kyrpides N.C."/>
        </authorList>
    </citation>
    <scope>NUCLEOTIDE SEQUENCE [LARGE SCALE GENOMIC DNA]</scope>
    <source>
        <strain>ATCC 43588 / DSM 3639 / JCM 9404 / F1</strain>
    </source>
</reference>
<gene>
    <name evidence="1" type="primary">rpl39e</name>
    <name type="ordered locus">Smar_1086</name>
</gene>
<name>RL39_STAMF</name>
<comment type="similarity">
    <text evidence="1">Belongs to the eukaryotic ribosomal protein eL39 family.</text>
</comment>
<accession>A3DNH3</accession>
<dbReference type="EMBL" id="CP000575">
    <property type="protein sequence ID" value="ABN70183.1"/>
    <property type="molecule type" value="Genomic_DNA"/>
</dbReference>
<dbReference type="RefSeq" id="WP_011839374.1">
    <property type="nucleotide sequence ID" value="NC_009033.1"/>
</dbReference>
<dbReference type="SMR" id="A3DNH3"/>
<dbReference type="STRING" id="399550.Smar_1086"/>
<dbReference type="GeneID" id="4907205"/>
<dbReference type="KEGG" id="smr:Smar_1086"/>
<dbReference type="eggNOG" id="arCOG04177">
    <property type="taxonomic scope" value="Archaea"/>
</dbReference>
<dbReference type="HOGENOM" id="CLU_181948_4_0_2"/>
<dbReference type="OrthoDB" id="65887at2157"/>
<dbReference type="Proteomes" id="UP000000254">
    <property type="component" value="Chromosome"/>
</dbReference>
<dbReference type="GO" id="GO:1990904">
    <property type="term" value="C:ribonucleoprotein complex"/>
    <property type="evidence" value="ECO:0007669"/>
    <property type="project" value="UniProtKB-KW"/>
</dbReference>
<dbReference type="GO" id="GO:0005840">
    <property type="term" value="C:ribosome"/>
    <property type="evidence" value="ECO:0007669"/>
    <property type="project" value="UniProtKB-KW"/>
</dbReference>
<dbReference type="GO" id="GO:0003735">
    <property type="term" value="F:structural constituent of ribosome"/>
    <property type="evidence" value="ECO:0007669"/>
    <property type="project" value="InterPro"/>
</dbReference>
<dbReference type="GO" id="GO:0006412">
    <property type="term" value="P:translation"/>
    <property type="evidence" value="ECO:0007669"/>
    <property type="project" value="UniProtKB-UniRule"/>
</dbReference>
<dbReference type="FunFam" id="1.10.1620.10:FF:000001">
    <property type="entry name" value="60S ribosomal protein-like L39"/>
    <property type="match status" value="1"/>
</dbReference>
<dbReference type="Gene3D" id="1.10.1620.10">
    <property type="entry name" value="Ribosomal protein L39e"/>
    <property type="match status" value="1"/>
</dbReference>
<dbReference type="HAMAP" id="MF_00629">
    <property type="entry name" value="Ribosomal_eL39"/>
    <property type="match status" value="1"/>
</dbReference>
<dbReference type="InterPro" id="IPR000077">
    <property type="entry name" value="Ribosomal_eL39"/>
</dbReference>
<dbReference type="InterPro" id="IPR023626">
    <property type="entry name" value="Ribosomal_eL39_dom_sf"/>
</dbReference>
<dbReference type="NCBIfam" id="NF002316">
    <property type="entry name" value="PRK01242.1"/>
    <property type="match status" value="1"/>
</dbReference>
<dbReference type="Pfam" id="PF00832">
    <property type="entry name" value="Ribosomal_L39"/>
    <property type="match status" value="1"/>
</dbReference>
<dbReference type="SUPFAM" id="SSF48662">
    <property type="entry name" value="Ribosomal protein L39e"/>
    <property type="match status" value="1"/>
</dbReference>
<sequence length="51" mass="6223">MARNKPLARKLRLAAAYKENRPVPIWVSVKTRLKVRRGFRLRHWRRTKLKV</sequence>
<protein>
    <recommendedName>
        <fullName evidence="1">Large ribosomal subunit protein eL39</fullName>
    </recommendedName>
    <alternativeName>
        <fullName evidence="2">50S ribosomal protein L39e</fullName>
    </alternativeName>
</protein>
<organism>
    <name type="scientific">Staphylothermus marinus (strain ATCC 43588 / DSM 3639 / JCM 9404 / F1)</name>
    <dbReference type="NCBI Taxonomy" id="399550"/>
    <lineage>
        <taxon>Archaea</taxon>
        <taxon>Thermoproteota</taxon>
        <taxon>Thermoprotei</taxon>
        <taxon>Desulfurococcales</taxon>
        <taxon>Desulfurococcaceae</taxon>
        <taxon>Staphylothermus</taxon>
    </lineage>
</organism>
<feature type="chain" id="PRO_1000051696" description="Large ribosomal subunit protein eL39">
    <location>
        <begin position="1"/>
        <end position="51"/>
    </location>
</feature>
<keyword id="KW-1185">Reference proteome</keyword>
<keyword id="KW-0687">Ribonucleoprotein</keyword>
<keyword id="KW-0689">Ribosomal protein</keyword>